<comment type="function">
    <text evidence="1">Can catalyze the hydrolysis of ATP in the presence of single-stranded DNA, the ATP-dependent uptake of single-stranded DNA by duplex DNA, and the ATP-dependent hybridization of homologous single-stranded DNAs. It interacts with LexA causing its activation and leading to its autocatalytic cleavage.</text>
</comment>
<comment type="subcellular location">
    <subcellularLocation>
        <location evidence="1">Cytoplasm</location>
    </subcellularLocation>
</comment>
<comment type="similarity">
    <text evidence="1">Belongs to the RecA family.</text>
</comment>
<gene>
    <name evidence="1" type="primary">recA</name>
    <name type="ordered locus">ECED1_3148</name>
</gene>
<feature type="chain" id="PRO_1000193313" description="Protein RecA">
    <location>
        <begin position="1"/>
        <end position="353"/>
    </location>
</feature>
<feature type="region of interest" description="Disordered" evidence="2">
    <location>
        <begin position="330"/>
        <end position="353"/>
    </location>
</feature>
<feature type="compositionally biased region" description="Acidic residues" evidence="2">
    <location>
        <begin position="339"/>
        <end position="353"/>
    </location>
</feature>
<feature type="binding site" evidence="1">
    <location>
        <begin position="67"/>
        <end position="74"/>
    </location>
    <ligand>
        <name>ATP</name>
        <dbReference type="ChEBI" id="CHEBI:30616"/>
    </ligand>
</feature>
<sequence>MAIDENKQKALAAALGQIEKQFGKGSIMRLGEDRSMDVETISTGSLSLDIALGAGGLPMGRIVEIYGPESSGKTTLTLQVIAAAQREGKTCAFIDAEHALDPIYARKLGVDIDNLLCSQPDTGEQALEICDALARSGAVDVIVVDSVAALTPKAEIEGEIGDSHMGLAARMMSQAMRKLAGNLKQSNTLLIFINQIRMKIGVMFGNPETTTGGNALKFYASVRLDIRRIGAVKEGENVVGSETRVKVVKNKIAAPFKQAEFQILYGEGINFYGELVDLGVKEKLIEKAGAWYSYKGEKIGQGKANATAWLKDNPETAKEIEKKVRELLLSNPNSTPDFSVDDSEGVAETNEDF</sequence>
<protein>
    <recommendedName>
        <fullName evidence="1">Protein RecA</fullName>
    </recommendedName>
    <alternativeName>
        <fullName evidence="1">Recombinase A</fullName>
    </alternativeName>
</protein>
<keyword id="KW-0067">ATP-binding</keyword>
<keyword id="KW-0963">Cytoplasm</keyword>
<keyword id="KW-0227">DNA damage</keyword>
<keyword id="KW-0233">DNA recombination</keyword>
<keyword id="KW-0234">DNA repair</keyword>
<keyword id="KW-0238">DNA-binding</keyword>
<keyword id="KW-0547">Nucleotide-binding</keyword>
<keyword id="KW-0742">SOS response</keyword>
<reference key="1">
    <citation type="journal article" date="2009" name="PLoS Genet.">
        <title>Organised genome dynamics in the Escherichia coli species results in highly diverse adaptive paths.</title>
        <authorList>
            <person name="Touchon M."/>
            <person name="Hoede C."/>
            <person name="Tenaillon O."/>
            <person name="Barbe V."/>
            <person name="Baeriswyl S."/>
            <person name="Bidet P."/>
            <person name="Bingen E."/>
            <person name="Bonacorsi S."/>
            <person name="Bouchier C."/>
            <person name="Bouvet O."/>
            <person name="Calteau A."/>
            <person name="Chiapello H."/>
            <person name="Clermont O."/>
            <person name="Cruveiller S."/>
            <person name="Danchin A."/>
            <person name="Diard M."/>
            <person name="Dossat C."/>
            <person name="Karoui M.E."/>
            <person name="Frapy E."/>
            <person name="Garry L."/>
            <person name="Ghigo J.M."/>
            <person name="Gilles A.M."/>
            <person name="Johnson J."/>
            <person name="Le Bouguenec C."/>
            <person name="Lescat M."/>
            <person name="Mangenot S."/>
            <person name="Martinez-Jehanne V."/>
            <person name="Matic I."/>
            <person name="Nassif X."/>
            <person name="Oztas S."/>
            <person name="Petit M.A."/>
            <person name="Pichon C."/>
            <person name="Rouy Z."/>
            <person name="Ruf C.S."/>
            <person name="Schneider D."/>
            <person name="Tourret J."/>
            <person name="Vacherie B."/>
            <person name="Vallenet D."/>
            <person name="Medigue C."/>
            <person name="Rocha E.P.C."/>
            <person name="Denamur E."/>
        </authorList>
    </citation>
    <scope>NUCLEOTIDE SEQUENCE [LARGE SCALE GENOMIC DNA]</scope>
    <source>
        <strain>ED1a</strain>
    </source>
</reference>
<organism>
    <name type="scientific">Escherichia coli O81 (strain ED1a)</name>
    <dbReference type="NCBI Taxonomy" id="585397"/>
    <lineage>
        <taxon>Bacteria</taxon>
        <taxon>Pseudomonadati</taxon>
        <taxon>Pseudomonadota</taxon>
        <taxon>Gammaproteobacteria</taxon>
        <taxon>Enterobacterales</taxon>
        <taxon>Enterobacteriaceae</taxon>
        <taxon>Escherichia</taxon>
    </lineage>
</organism>
<evidence type="ECO:0000255" key="1">
    <source>
        <dbReference type="HAMAP-Rule" id="MF_00268"/>
    </source>
</evidence>
<evidence type="ECO:0000256" key="2">
    <source>
        <dbReference type="SAM" id="MobiDB-lite"/>
    </source>
</evidence>
<name>RECA_ECO81</name>
<accession>B7MYJ9</accession>
<dbReference type="EMBL" id="CU928162">
    <property type="protein sequence ID" value="CAR09165.1"/>
    <property type="molecule type" value="Genomic_DNA"/>
</dbReference>
<dbReference type="RefSeq" id="WP_000963143.1">
    <property type="nucleotide sequence ID" value="NC_011745.1"/>
</dbReference>
<dbReference type="SMR" id="B7MYJ9"/>
<dbReference type="GeneID" id="93779312"/>
<dbReference type="KEGG" id="ecq:ECED1_3148"/>
<dbReference type="HOGENOM" id="CLU_040469_3_2_6"/>
<dbReference type="Proteomes" id="UP000000748">
    <property type="component" value="Chromosome"/>
</dbReference>
<dbReference type="GO" id="GO:0005829">
    <property type="term" value="C:cytosol"/>
    <property type="evidence" value="ECO:0007669"/>
    <property type="project" value="TreeGrafter"/>
</dbReference>
<dbReference type="GO" id="GO:0005524">
    <property type="term" value="F:ATP binding"/>
    <property type="evidence" value="ECO:0007669"/>
    <property type="project" value="UniProtKB-UniRule"/>
</dbReference>
<dbReference type="GO" id="GO:0016887">
    <property type="term" value="F:ATP hydrolysis activity"/>
    <property type="evidence" value="ECO:0007669"/>
    <property type="project" value="InterPro"/>
</dbReference>
<dbReference type="GO" id="GO:0140664">
    <property type="term" value="F:ATP-dependent DNA damage sensor activity"/>
    <property type="evidence" value="ECO:0007669"/>
    <property type="project" value="InterPro"/>
</dbReference>
<dbReference type="GO" id="GO:0003684">
    <property type="term" value="F:damaged DNA binding"/>
    <property type="evidence" value="ECO:0007669"/>
    <property type="project" value="UniProtKB-UniRule"/>
</dbReference>
<dbReference type="GO" id="GO:0003697">
    <property type="term" value="F:single-stranded DNA binding"/>
    <property type="evidence" value="ECO:0007669"/>
    <property type="project" value="UniProtKB-UniRule"/>
</dbReference>
<dbReference type="GO" id="GO:0006310">
    <property type="term" value="P:DNA recombination"/>
    <property type="evidence" value="ECO:0007669"/>
    <property type="project" value="UniProtKB-UniRule"/>
</dbReference>
<dbReference type="GO" id="GO:0006281">
    <property type="term" value="P:DNA repair"/>
    <property type="evidence" value="ECO:0007669"/>
    <property type="project" value="UniProtKB-UniRule"/>
</dbReference>
<dbReference type="GO" id="GO:0009432">
    <property type="term" value="P:SOS response"/>
    <property type="evidence" value="ECO:0007669"/>
    <property type="project" value="UniProtKB-UniRule"/>
</dbReference>
<dbReference type="CDD" id="cd00983">
    <property type="entry name" value="RecA"/>
    <property type="match status" value="1"/>
</dbReference>
<dbReference type="FunFam" id="3.40.50.300:FF:000087">
    <property type="entry name" value="Recombinase RecA"/>
    <property type="match status" value="1"/>
</dbReference>
<dbReference type="Gene3D" id="3.40.50.300">
    <property type="entry name" value="P-loop containing nucleotide triphosphate hydrolases"/>
    <property type="match status" value="1"/>
</dbReference>
<dbReference type="HAMAP" id="MF_00268">
    <property type="entry name" value="RecA"/>
    <property type="match status" value="1"/>
</dbReference>
<dbReference type="InterPro" id="IPR003593">
    <property type="entry name" value="AAA+_ATPase"/>
</dbReference>
<dbReference type="InterPro" id="IPR013765">
    <property type="entry name" value="DNA_recomb/repair_RecA"/>
</dbReference>
<dbReference type="InterPro" id="IPR020584">
    <property type="entry name" value="DNA_recomb/repair_RecA_CS"/>
</dbReference>
<dbReference type="InterPro" id="IPR027417">
    <property type="entry name" value="P-loop_NTPase"/>
</dbReference>
<dbReference type="InterPro" id="IPR049261">
    <property type="entry name" value="RecA-like_C"/>
</dbReference>
<dbReference type="InterPro" id="IPR049428">
    <property type="entry name" value="RecA-like_N"/>
</dbReference>
<dbReference type="InterPro" id="IPR020588">
    <property type="entry name" value="RecA_ATP-bd"/>
</dbReference>
<dbReference type="InterPro" id="IPR023400">
    <property type="entry name" value="RecA_C_sf"/>
</dbReference>
<dbReference type="InterPro" id="IPR020587">
    <property type="entry name" value="RecA_monomer-monomer_interface"/>
</dbReference>
<dbReference type="NCBIfam" id="TIGR02012">
    <property type="entry name" value="tigrfam_recA"/>
    <property type="match status" value="1"/>
</dbReference>
<dbReference type="PANTHER" id="PTHR45900:SF1">
    <property type="entry name" value="MITOCHONDRIAL DNA REPAIR PROTEIN RECA HOMOLOG-RELATED"/>
    <property type="match status" value="1"/>
</dbReference>
<dbReference type="PANTHER" id="PTHR45900">
    <property type="entry name" value="RECA"/>
    <property type="match status" value="1"/>
</dbReference>
<dbReference type="Pfam" id="PF00154">
    <property type="entry name" value="RecA"/>
    <property type="match status" value="1"/>
</dbReference>
<dbReference type="Pfam" id="PF21096">
    <property type="entry name" value="RecA_C"/>
    <property type="match status" value="1"/>
</dbReference>
<dbReference type="PRINTS" id="PR00142">
    <property type="entry name" value="RECA"/>
</dbReference>
<dbReference type="SMART" id="SM00382">
    <property type="entry name" value="AAA"/>
    <property type="match status" value="1"/>
</dbReference>
<dbReference type="SUPFAM" id="SSF52540">
    <property type="entry name" value="P-loop containing nucleoside triphosphate hydrolases"/>
    <property type="match status" value="1"/>
</dbReference>
<dbReference type="SUPFAM" id="SSF54752">
    <property type="entry name" value="RecA protein, C-terminal domain"/>
    <property type="match status" value="1"/>
</dbReference>
<dbReference type="PROSITE" id="PS00321">
    <property type="entry name" value="RECA_1"/>
    <property type="match status" value="1"/>
</dbReference>
<dbReference type="PROSITE" id="PS50162">
    <property type="entry name" value="RECA_2"/>
    <property type="match status" value="1"/>
</dbReference>
<dbReference type="PROSITE" id="PS50163">
    <property type="entry name" value="RECA_3"/>
    <property type="match status" value="1"/>
</dbReference>
<proteinExistence type="inferred from homology"/>